<protein>
    <recommendedName>
        <fullName evidence="1">Lipoate-protein ligase A</fullName>
        <ecNumber evidence="1">6.3.1.20</ecNumber>
    </recommendedName>
    <alternativeName>
        <fullName evidence="1">Lipoate--protein ligase</fullName>
    </alternativeName>
</protein>
<accession>A7MIG6</accession>
<name>LPLA_CROS8</name>
<keyword id="KW-0067">ATP-binding</keyword>
<keyword id="KW-0963">Cytoplasm</keyword>
<keyword id="KW-0436">Ligase</keyword>
<keyword id="KW-0547">Nucleotide-binding</keyword>
<keyword id="KW-1185">Reference proteome</keyword>
<dbReference type="EC" id="6.3.1.20" evidence="1"/>
<dbReference type="EMBL" id="CP000783">
    <property type="protein sequence ID" value="ABU78587.1"/>
    <property type="molecule type" value="Genomic_DNA"/>
</dbReference>
<dbReference type="RefSeq" id="WP_012125836.1">
    <property type="nucleotide sequence ID" value="NC_009778.1"/>
</dbReference>
<dbReference type="SMR" id="A7MIG6"/>
<dbReference type="KEGG" id="esa:ESA_03366"/>
<dbReference type="PATRIC" id="fig|290339.8.peg.2990"/>
<dbReference type="HOGENOM" id="CLU_022986_0_1_6"/>
<dbReference type="UniPathway" id="UPA00537">
    <property type="reaction ID" value="UER00594"/>
</dbReference>
<dbReference type="UniPathway" id="UPA00537">
    <property type="reaction ID" value="UER00595"/>
</dbReference>
<dbReference type="Proteomes" id="UP000000260">
    <property type="component" value="Chromosome"/>
</dbReference>
<dbReference type="GO" id="GO:0005829">
    <property type="term" value="C:cytosol"/>
    <property type="evidence" value="ECO:0007669"/>
    <property type="project" value="TreeGrafter"/>
</dbReference>
<dbReference type="GO" id="GO:0005524">
    <property type="term" value="F:ATP binding"/>
    <property type="evidence" value="ECO:0007669"/>
    <property type="project" value="UniProtKB-KW"/>
</dbReference>
<dbReference type="GO" id="GO:0016979">
    <property type="term" value="F:lipoate-protein ligase activity"/>
    <property type="evidence" value="ECO:0007669"/>
    <property type="project" value="UniProtKB-UniRule"/>
</dbReference>
<dbReference type="GO" id="GO:0017118">
    <property type="term" value="F:lipoyltransferase activity"/>
    <property type="evidence" value="ECO:0007669"/>
    <property type="project" value="TreeGrafter"/>
</dbReference>
<dbReference type="GO" id="GO:0036211">
    <property type="term" value="P:protein modification process"/>
    <property type="evidence" value="ECO:0007669"/>
    <property type="project" value="InterPro"/>
</dbReference>
<dbReference type="CDD" id="cd16443">
    <property type="entry name" value="LplA"/>
    <property type="match status" value="1"/>
</dbReference>
<dbReference type="FunFam" id="3.30.930.10:FF:000024">
    <property type="entry name" value="Lipoate-protein ligase A"/>
    <property type="match status" value="1"/>
</dbReference>
<dbReference type="Gene3D" id="3.30.930.10">
    <property type="entry name" value="Bira Bifunctional Protein, Domain 2"/>
    <property type="match status" value="1"/>
</dbReference>
<dbReference type="Gene3D" id="3.30.390.50">
    <property type="entry name" value="CO dehydrogenase flavoprotein, C-terminal domain"/>
    <property type="match status" value="1"/>
</dbReference>
<dbReference type="HAMAP" id="MF_01602">
    <property type="entry name" value="LplA"/>
    <property type="match status" value="1"/>
</dbReference>
<dbReference type="InterPro" id="IPR045864">
    <property type="entry name" value="aa-tRNA-synth_II/BPL/LPL"/>
</dbReference>
<dbReference type="InterPro" id="IPR004143">
    <property type="entry name" value="BPL_LPL_catalytic"/>
</dbReference>
<dbReference type="InterPro" id="IPR023741">
    <property type="entry name" value="Lipoate_ligase_A"/>
</dbReference>
<dbReference type="InterPro" id="IPR019491">
    <property type="entry name" value="Lipoate_protein_ligase_C"/>
</dbReference>
<dbReference type="InterPro" id="IPR004562">
    <property type="entry name" value="LipoylTrfase_LipoateP_Ligase"/>
</dbReference>
<dbReference type="NCBIfam" id="TIGR00545">
    <property type="entry name" value="lipoyltrans"/>
    <property type="match status" value="1"/>
</dbReference>
<dbReference type="PANTHER" id="PTHR12561">
    <property type="entry name" value="LIPOATE-PROTEIN LIGASE"/>
    <property type="match status" value="1"/>
</dbReference>
<dbReference type="PANTHER" id="PTHR12561:SF3">
    <property type="entry name" value="LIPOYLTRANSFERASE 1, MITOCHONDRIAL"/>
    <property type="match status" value="1"/>
</dbReference>
<dbReference type="Pfam" id="PF10437">
    <property type="entry name" value="Lip_prot_lig_C"/>
    <property type="match status" value="1"/>
</dbReference>
<dbReference type="Pfam" id="PF21948">
    <property type="entry name" value="LplA-B_cat"/>
    <property type="match status" value="1"/>
</dbReference>
<dbReference type="SUPFAM" id="SSF55681">
    <property type="entry name" value="Class II aaRS and biotin synthetases"/>
    <property type="match status" value="1"/>
</dbReference>
<dbReference type="SUPFAM" id="SSF82649">
    <property type="entry name" value="SufE/NifU"/>
    <property type="match status" value="1"/>
</dbReference>
<dbReference type="PROSITE" id="PS51733">
    <property type="entry name" value="BPL_LPL_CATALYTIC"/>
    <property type="match status" value="1"/>
</dbReference>
<comment type="function">
    <text evidence="1">Catalyzes both the ATP-dependent activation of exogenously supplied lipoate to lipoyl-AMP and the transfer of the activated lipoyl onto the lipoyl domains of lipoate-dependent enzymes.</text>
</comment>
<comment type="catalytic activity">
    <reaction evidence="1">
        <text>L-lysyl-[lipoyl-carrier protein] + (R)-lipoate + ATP = N(6)-[(R)-lipoyl]-L-lysyl-[lipoyl-carrier protein] + AMP + diphosphate + H(+)</text>
        <dbReference type="Rhea" id="RHEA:49288"/>
        <dbReference type="Rhea" id="RHEA-COMP:10500"/>
        <dbReference type="Rhea" id="RHEA-COMP:10502"/>
        <dbReference type="ChEBI" id="CHEBI:15378"/>
        <dbReference type="ChEBI" id="CHEBI:29969"/>
        <dbReference type="ChEBI" id="CHEBI:30616"/>
        <dbReference type="ChEBI" id="CHEBI:33019"/>
        <dbReference type="ChEBI" id="CHEBI:83088"/>
        <dbReference type="ChEBI" id="CHEBI:83099"/>
        <dbReference type="ChEBI" id="CHEBI:456215"/>
        <dbReference type="EC" id="6.3.1.20"/>
    </reaction>
</comment>
<comment type="pathway">
    <text evidence="1">Protein modification; protein lipoylation via exogenous pathway; protein N(6)-(lipoyl)lysine from lipoate: step 1/2.</text>
</comment>
<comment type="pathway">
    <text evidence="1">Protein modification; protein lipoylation via exogenous pathway; protein N(6)-(lipoyl)lysine from lipoate: step 2/2.</text>
</comment>
<comment type="subunit">
    <text evidence="1">Monomer.</text>
</comment>
<comment type="subcellular location">
    <subcellularLocation>
        <location evidence="1">Cytoplasm</location>
    </subcellularLocation>
</comment>
<comment type="miscellaneous">
    <text evidence="1">In the transfer reaction, the free carboxyl group of lipoic acid is attached via an amide linkage to the epsilon-amino group of a specific lysine residue of lipoyl domains of lipoate-dependent enzymes.</text>
</comment>
<comment type="similarity">
    <text evidence="1">Belongs to the LplA family.</text>
</comment>
<proteinExistence type="inferred from homology"/>
<evidence type="ECO:0000255" key="1">
    <source>
        <dbReference type="HAMAP-Rule" id="MF_01602"/>
    </source>
</evidence>
<evidence type="ECO:0000255" key="2">
    <source>
        <dbReference type="PROSITE-ProRule" id="PRU01067"/>
    </source>
</evidence>
<organism>
    <name type="scientific">Cronobacter sakazakii (strain ATCC BAA-894)</name>
    <name type="common">Enterobacter sakazakii</name>
    <dbReference type="NCBI Taxonomy" id="290339"/>
    <lineage>
        <taxon>Bacteria</taxon>
        <taxon>Pseudomonadati</taxon>
        <taxon>Pseudomonadota</taxon>
        <taxon>Gammaproteobacteria</taxon>
        <taxon>Enterobacterales</taxon>
        <taxon>Enterobacteriaceae</taxon>
        <taxon>Cronobacter</taxon>
    </lineage>
</organism>
<reference key="1">
    <citation type="journal article" date="2010" name="PLoS ONE">
        <title>Genome sequence of Cronobacter sakazakii BAA-894 and comparative genomic hybridization analysis with other Cronobacter species.</title>
        <authorList>
            <person name="Kucerova E."/>
            <person name="Clifton S.W."/>
            <person name="Xia X.Q."/>
            <person name="Long F."/>
            <person name="Porwollik S."/>
            <person name="Fulton L."/>
            <person name="Fronick C."/>
            <person name="Minx P."/>
            <person name="Kyung K."/>
            <person name="Warren W."/>
            <person name="Fulton R."/>
            <person name="Feng D."/>
            <person name="Wollam A."/>
            <person name="Shah N."/>
            <person name="Bhonagiri V."/>
            <person name="Nash W.E."/>
            <person name="Hallsworth-Pepin K."/>
            <person name="Wilson R.K."/>
            <person name="McClelland M."/>
            <person name="Forsythe S.J."/>
        </authorList>
    </citation>
    <scope>NUCLEOTIDE SEQUENCE [LARGE SCALE GENOMIC DNA]</scope>
    <source>
        <strain>ATCC BAA-894</strain>
    </source>
</reference>
<sequence>MSSLRLLISDSYDPWFNLAVEECIFRQMPATQRVLFLWRNADTVVIGRAQNPWKECNTRRMEEDNVRLARRSSGGGAVFHDLGNTCFTFMAGKPEYDKSVSTAIVINALAQLGIPASASGRNDLVVETAEGPRKISGSAYRETMDRGFHHGTLLLNADLSRLSNYLNPDKKKLQAKGITSVRGRVANIHDLKPGVTHAQICEAVTEAFFAYYGERVAAEVISPDAFPDLPGFAETFARQSSWEWNFGQAPAFTHQLDERFVWGGVELHFDVEKGHITRTQLFTDSLNPAPLEALASRLQGCVYQASALQGVCEALVSEFPAQAAELREVGAWMAQAVR</sequence>
<gene>
    <name evidence="1" type="primary">lplA</name>
    <name type="ordered locus">ESA_03366</name>
</gene>
<feature type="chain" id="PRO_1000069383" description="Lipoate-protein ligase A">
    <location>
        <begin position="1"/>
        <end position="338"/>
    </location>
</feature>
<feature type="domain" description="BPL/LPL catalytic" evidence="2">
    <location>
        <begin position="29"/>
        <end position="216"/>
    </location>
</feature>
<feature type="binding site" evidence="1">
    <location>
        <position position="71"/>
    </location>
    <ligand>
        <name>ATP</name>
        <dbReference type="ChEBI" id="CHEBI:30616"/>
    </ligand>
</feature>
<feature type="binding site" evidence="1">
    <location>
        <begin position="76"/>
        <end position="79"/>
    </location>
    <ligand>
        <name>ATP</name>
        <dbReference type="ChEBI" id="CHEBI:30616"/>
    </ligand>
</feature>
<feature type="binding site" evidence="1">
    <location>
        <position position="134"/>
    </location>
    <ligand>
        <name>(R)-lipoate</name>
        <dbReference type="ChEBI" id="CHEBI:83088"/>
    </ligand>
</feature>
<feature type="binding site" evidence="1">
    <location>
        <position position="134"/>
    </location>
    <ligand>
        <name>ATP</name>
        <dbReference type="ChEBI" id="CHEBI:30616"/>
    </ligand>
</feature>